<dbReference type="EC" id="4.1.2.4" evidence="1"/>
<dbReference type="EMBL" id="CP000896">
    <property type="protein sequence ID" value="ABX81315.1"/>
    <property type="molecule type" value="Genomic_DNA"/>
</dbReference>
<dbReference type="RefSeq" id="WP_012242646.1">
    <property type="nucleotide sequence ID" value="NC_010163.1"/>
</dbReference>
<dbReference type="SMR" id="A9NG35"/>
<dbReference type="STRING" id="441768.ACL_0699"/>
<dbReference type="GeneID" id="41338863"/>
<dbReference type="KEGG" id="acl:ACL_0699"/>
<dbReference type="eggNOG" id="COG0274">
    <property type="taxonomic scope" value="Bacteria"/>
</dbReference>
<dbReference type="HOGENOM" id="CLU_053595_0_1_14"/>
<dbReference type="OrthoDB" id="9778711at2"/>
<dbReference type="UniPathway" id="UPA00002">
    <property type="reaction ID" value="UER00468"/>
</dbReference>
<dbReference type="Proteomes" id="UP000008558">
    <property type="component" value="Chromosome"/>
</dbReference>
<dbReference type="GO" id="GO:0005737">
    <property type="term" value="C:cytoplasm"/>
    <property type="evidence" value="ECO:0007669"/>
    <property type="project" value="UniProtKB-SubCell"/>
</dbReference>
<dbReference type="GO" id="GO:0004139">
    <property type="term" value="F:deoxyribose-phosphate aldolase activity"/>
    <property type="evidence" value="ECO:0007669"/>
    <property type="project" value="UniProtKB-UniRule"/>
</dbReference>
<dbReference type="GO" id="GO:0006018">
    <property type="term" value="P:2-deoxyribose 1-phosphate catabolic process"/>
    <property type="evidence" value="ECO:0007669"/>
    <property type="project" value="UniProtKB-UniRule"/>
</dbReference>
<dbReference type="GO" id="GO:0016052">
    <property type="term" value="P:carbohydrate catabolic process"/>
    <property type="evidence" value="ECO:0007669"/>
    <property type="project" value="TreeGrafter"/>
</dbReference>
<dbReference type="GO" id="GO:0009264">
    <property type="term" value="P:deoxyribonucleotide catabolic process"/>
    <property type="evidence" value="ECO:0007669"/>
    <property type="project" value="InterPro"/>
</dbReference>
<dbReference type="CDD" id="cd00959">
    <property type="entry name" value="DeoC"/>
    <property type="match status" value="1"/>
</dbReference>
<dbReference type="FunFam" id="3.20.20.70:FF:000044">
    <property type="entry name" value="Deoxyribose-phosphate aldolase"/>
    <property type="match status" value="1"/>
</dbReference>
<dbReference type="Gene3D" id="3.20.20.70">
    <property type="entry name" value="Aldolase class I"/>
    <property type="match status" value="1"/>
</dbReference>
<dbReference type="HAMAP" id="MF_00114">
    <property type="entry name" value="DeoC_type1"/>
    <property type="match status" value="1"/>
</dbReference>
<dbReference type="InterPro" id="IPR013785">
    <property type="entry name" value="Aldolase_TIM"/>
</dbReference>
<dbReference type="InterPro" id="IPR011343">
    <property type="entry name" value="DeoC"/>
</dbReference>
<dbReference type="InterPro" id="IPR002915">
    <property type="entry name" value="DeoC/FbaB/LacD_aldolase"/>
</dbReference>
<dbReference type="InterPro" id="IPR028581">
    <property type="entry name" value="DeoC_typeI"/>
</dbReference>
<dbReference type="NCBIfam" id="TIGR00126">
    <property type="entry name" value="deoC"/>
    <property type="match status" value="1"/>
</dbReference>
<dbReference type="PANTHER" id="PTHR10889">
    <property type="entry name" value="DEOXYRIBOSE-PHOSPHATE ALDOLASE"/>
    <property type="match status" value="1"/>
</dbReference>
<dbReference type="PANTHER" id="PTHR10889:SF1">
    <property type="entry name" value="DEOXYRIBOSE-PHOSPHATE ALDOLASE"/>
    <property type="match status" value="1"/>
</dbReference>
<dbReference type="Pfam" id="PF01791">
    <property type="entry name" value="DeoC"/>
    <property type="match status" value="1"/>
</dbReference>
<dbReference type="PIRSF" id="PIRSF001357">
    <property type="entry name" value="DeoC"/>
    <property type="match status" value="1"/>
</dbReference>
<dbReference type="SMART" id="SM01133">
    <property type="entry name" value="DeoC"/>
    <property type="match status" value="1"/>
</dbReference>
<dbReference type="SUPFAM" id="SSF51569">
    <property type="entry name" value="Aldolase"/>
    <property type="match status" value="1"/>
</dbReference>
<name>DEOC_ACHLI</name>
<protein>
    <recommendedName>
        <fullName evidence="1">Deoxyribose-phosphate aldolase</fullName>
        <shortName evidence="1">DERA</shortName>
        <ecNumber evidence="1">4.1.2.4</ecNumber>
    </recommendedName>
    <alternativeName>
        <fullName evidence="1">2-deoxy-D-ribose 5-phosphate aldolase</fullName>
    </alternativeName>
    <alternativeName>
        <fullName evidence="1">Phosphodeoxyriboaldolase</fullName>
        <shortName evidence="1">Deoxyriboaldolase</shortName>
    </alternativeName>
</protein>
<comment type="function">
    <text evidence="1">Catalyzes a reversible aldol reaction between acetaldehyde and D-glyceraldehyde 3-phosphate to generate 2-deoxy-D-ribose 5-phosphate.</text>
</comment>
<comment type="catalytic activity">
    <reaction evidence="1">
        <text>2-deoxy-D-ribose 5-phosphate = D-glyceraldehyde 3-phosphate + acetaldehyde</text>
        <dbReference type="Rhea" id="RHEA:12821"/>
        <dbReference type="ChEBI" id="CHEBI:15343"/>
        <dbReference type="ChEBI" id="CHEBI:59776"/>
        <dbReference type="ChEBI" id="CHEBI:62877"/>
        <dbReference type="EC" id="4.1.2.4"/>
    </reaction>
</comment>
<comment type="pathway">
    <text evidence="1">Carbohydrate degradation; 2-deoxy-D-ribose 1-phosphate degradation; D-glyceraldehyde 3-phosphate and acetaldehyde from 2-deoxy-alpha-D-ribose 1-phosphate: step 2/2.</text>
</comment>
<comment type="subcellular location">
    <subcellularLocation>
        <location evidence="1">Cytoplasm</location>
    </subcellularLocation>
</comment>
<comment type="similarity">
    <text evidence="1">Belongs to the DeoC/FbaB aldolase family. DeoC type 1 subfamily.</text>
</comment>
<gene>
    <name evidence="1" type="primary">deoC</name>
    <name type="ordered locus">ACL_0699</name>
</gene>
<evidence type="ECO:0000255" key="1">
    <source>
        <dbReference type="HAMAP-Rule" id="MF_00114"/>
    </source>
</evidence>
<feature type="chain" id="PRO_1000076025" description="Deoxyribose-phosphate aldolase">
    <location>
        <begin position="1"/>
        <end position="222"/>
    </location>
</feature>
<feature type="active site" description="Proton donor/acceptor" evidence="1">
    <location>
        <position position="89"/>
    </location>
</feature>
<feature type="active site" description="Schiff-base intermediate with acetaldehyde" evidence="1">
    <location>
        <position position="151"/>
    </location>
</feature>
<feature type="active site" description="Proton donor/acceptor" evidence="1">
    <location>
        <position position="180"/>
    </location>
</feature>
<keyword id="KW-0963">Cytoplasm</keyword>
<keyword id="KW-0456">Lyase</keyword>
<keyword id="KW-1185">Reference proteome</keyword>
<keyword id="KW-0704">Schiff base</keyword>
<sequence length="222" mass="23781">MKLNTYIDHTKLGPIVTLSDIDTLIDEAIEHQFKSVCVSPIWVAHAKSRLEGTGVLVCTVVGFPFGTHLPKVKAFETKEAIKQGADEIDMVVDVDAVRSKDRSRVSKDIKAVVKAAQGRTVKVIIETAYLDKKQITFVSKLAVKAGATFVKTSTGYASRGASVEDIVTIKKAVGDDALIKASGGIRSKEDALLMIEKGANRLGTSSGVKLIKGETSDGNTTY</sequence>
<organism>
    <name type="scientific">Acholeplasma laidlawii (strain PG-8A)</name>
    <dbReference type="NCBI Taxonomy" id="441768"/>
    <lineage>
        <taxon>Bacteria</taxon>
        <taxon>Bacillati</taxon>
        <taxon>Mycoplasmatota</taxon>
        <taxon>Mollicutes</taxon>
        <taxon>Acholeplasmatales</taxon>
        <taxon>Acholeplasmataceae</taxon>
        <taxon>Acholeplasma</taxon>
    </lineage>
</organism>
<accession>A9NG35</accession>
<proteinExistence type="inferred from homology"/>
<reference key="1">
    <citation type="journal article" date="2011" name="J. Bacteriol.">
        <title>Complete genome and proteome of Acholeplasma laidlawii.</title>
        <authorList>
            <person name="Lazarev V.N."/>
            <person name="Levitskii S.A."/>
            <person name="Basovskii Y.I."/>
            <person name="Chukin M.M."/>
            <person name="Akopian T.A."/>
            <person name="Vereshchagin V.V."/>
            <person name="Kostrjukova E.S."/>
            <person name="Kovaleva G.Y."/>
            <person name="Kazanov M.D."/>
            <person name="Malko D.B."/>
            <person name="Vitreschak A.G."/>
            <person name="Sernova N.V."/>
            <person name="Gelfand M.S."/>
            <person name="Demina I.A."/>
            <person name="Serebryakova M.V."/>
            <person name="Galyamina M.A."/>
            <person name="Vtyurin N.N."/>
            <person name="Rogov S.I."/>
            <person name="Alexeev D.G."/>
            <person name="Ladygina V.G."/>
            <person name="Govorun V.M."/>
        </authorList>
    </citation>
    <scope>NUCLEOTIDE SEQUENCE [LARGE SCALE GENOMIC DNA]</scope>
    <source>
        <strain>PG-8A</strain>
    </source>
</reference>